<gene>
    <name type="primary">ROX3</name>
    <name type="synonym">MED19</name>
    <name type="synonym">NUT3</name>
    <name type="synonym">SSN7</name>
    <name type="ordered locus">YBL093C</name>
    <name type="ORF">YBL0837</name>
</gene>
<accession>P25046</accession>
<accession>D6VPR0</accession>
<comment type="function">
    <text evidence="2 5 6 8">Component of the Mediator complex, a coactivator involved in the regulated transcription of nearly all RNA polymerase II-dependent genes. Mediator functions as a bridge to convey information from gene-specific regulatory proteins to the basal RNA polymerase II transcription machinery. The Mediator complex, having a compact conformation in its free form, is recruited to promoters by direct interactions with regulatory proteins and serves for the assembly of a functional preinitiation complex with RNA polymerase II and the general transcription factors. The Mediator complex unfolds to an extended conformation and partially surrounds RNA polymerase II, specifically interacting with the unphosphorylated form of the C-terminal domain (CTD) of RNA polymerase II. The Mediator complex dissociates from the RNA polymerase II holoenzyme and stays at the promoter when transcriptional elongation begins.</text>
</comment>
<comment type="subunit">
    <text evidence="2 8">Component of the Mediator complex, which is composed of at least 21 subunits that form three structurally distinct submodules. The Mediator head module contains MED6, MED8, MED11, SRB4/MED17, SRB5/MED18, ROX3/MED19, SRB2/MED20 and SRB6/MED22, the middle module contains MED1, MED4, NUT1/MED5, MED7, CSE2/MED9, NUT2/MED10, SRB7/MED21 and SOH1/MED31, and the tail module contains MED2, PGD1/MED3, RGR1/MED14, GAL11/MED15 and SIN4/MED16. The head and the middle modules interact directly with RNA polymerase II, whereas the elongated tail module interacts with gene-specific regulatory proteins.</text>
</comment>
<comment type="subcellular location">
    <subcellularLocation>
        <location evidence="3 7">Nucleus</location>
    </subcellularLocation>
</comment>
<comment type="miscellaneous">
    <text evidence="4">Present with 6116 molecules/cell in log phase SD medium.</text>
</comment>
<comment type="similarity">
    <text evidence="9">Belongs to the Mediator complex subunit 19 family.</text>
</comment>
<evidence type="ECO:0000256" key="1">
    <source>
        <dbReference type="SAM" id="MobiDB-lite"/>
    </source>
</evidence>
<evidence type="ECO:0000269" key="2">
    <source>
    </source>
</evidence>
<evidence type="ECO:0000269" key="3">
    <source>
    </source>
</evidence>
<evidence type="ECO:0000269" key="4">
    <source>
    </source>
</evidence>
<evidence type="ECO:0000269" key="5">
    <source>
    </source>
</evidence>
<evidence type="ECO:0000269" key="6">
    <source>
    </source>
</evidence>
<evidence type="ECO:0000269" key="7">
    <source>
    </source>
</evidence>
<evidence type="ECO:0000269" key="8">
    <source>
    </source>
</evidence>
<evidence type="ECO:0000305" key="9"/>
<keyword id="KW-0002">3D-structure</keyword>
<keyword id="KW-0010">Activator</keyword>
<keyword id="KW-0903">Direct protein sequencing</keyword>
<keyword id="KW-0539">Nucleus</keyword>
<keyword id="KW-1185">Reference proteome</keyword>
<keyword id="KW-0804">Transcription</keyword>
<keyword id="KW-0805">Transcription regulation</keyword>
<dbReference type="EMBL" id="X58300">
    <property type="protein sequence ID" value="CAA41233.1"/>
    <property type="molecule type" value="Genomic_DNA"/>
</dbReference>
<dbReference type="EMBL" id="X79489">
    <property type="protein sequence ID" value="CAA56009.1"/>
    <property type="molecule type" value="Genomic_DNA"/>
</dbReference>
<dbReference type="EMBL" id="Z35854">
    <property type="protein sequence ID" value="CAA84915.1"/>
    <property type="molecule type" value="Genomic_DNA"/>
</dbReference>
<dbReference type="EMBL" id="AY558292">
    <property type="protein sequence ID" value="AAS56618.1"/>
    <property type="molecule type" value="Genomic_DNA"/>
</dbReference>
<dbReference type="EMBL" id="BK006936">
    <property type="protein sequence ID" value="DAA07030.1"/>
    <property type="molecule type" value="Genomic_DNA"/>
</dbReference>
<dbReference type="PIR" id="S45409">
    <property type="entry name" value="S45409"/>
</dbReference>
<dbReference type="RefSeq" id="NP_009459.1">
    <property type="nucleotide sequence ID" value="NM_001178333.1"/>
</dbReference>
<dbReference type="PDB" id="5OQM">
    <property type="method" value="EM"/>
    <property type="resolution" value="5.80 A"/>
    <property type="chains" value="m=1-220"/>
</dbReference>
<dbReference type="PDB" id="7UI9">
    <property type="method" value="EM"/>
    <property type="resolution" value="3.30 A"/>
    <property type="chains" value="s=1-220"/>
</dbReference>
<dbReference type="PDB" id="7UIF">
    <property type="method" value="EM"/>
    <property type="resolution" value="4.60 A"/>
    <property type="chains" value="s=1-220"/>
</dbReference>
<dbReference type="PDB" id="7UIG">
    <property type="method" value="EM"/>
    <property type="resolution" value="4.30 A"/>
    <property type="chains" value="s=1-220"/>
</dbReference>
<dbReference type="PDB" id="7UIO">
    <property type="method" value="EM"/>
    <property type="resolution" value="3.30 A"/>
    <property type="chains" value="As/Bs=1-220"/>
</dbReference>
<dbReference type="PDB" id="8CEN">
    <property type="method" value="EM"/>
    <property type="resolution" value="3.00 A"/>
    <property type="chains" value="m=1-220"/>
</dbReference>
<dbReference type="PDB" id="8CEO">
    <property type="method" value="EM"/>
    <property type="resolution" value="3.60 A"/>
    <property type="chains" value="m=1-220"/>
</dbReference>
<dbReference type="PDBsum" id="5OQM"/>
<dbReference type="PDBsum" id="7UI9"/>
<dbReference type="PDBsum" id="7UIF"/>
<dbReference type="PDBsum" id="7UIG"/>
<dbReference type="PDBsum" id="7UIO"/>
<dbReference type="PDBsum" id="8CEN"/>
<dbReference type="PDBsum" id="8CEO"/>
<dbReference type="EMDB" id="EMD-26542"/>
<dbReference type="EMDB" id="EMD-26544"/>
<dbReference type="EMDB" id="EMD-26545"/>
<dbReference type="EMDB" id="EMD-26551"/>
<dbReference type="EMDB" id="EMD-2786"/>
<dbReference type="EMDB" id="EMD-3850"/>
<dbReference type="SMR" id="P25046"/>
<dbReference type="BioGRID" id="32610">
    <property type="interactions" value="75"/>
</dbReference>
<dbReference type="ComplexPortal" id="CPX-3226">
    <property type="entry name" value="Core mediator complex"/>
</dbReference>
<dbReference type="DIP" id="DIP-2336N"/>
<dbReference type="FunCoup" id="P25046">
    <property type="interactions" value="112"/>
</dbReference>
<dbReference type="IntAct" id="P25046">
    <property type="interactions" value="46"/>
</dbReference>
<dbReference type="MINT" id="P25046"/>
<dbReference type="STRING" id="4932.YBL093C"/>
<dbReference type="iPTMnet" id="P25046"/>
<dbReference type="PaxDb" id="4932-YBL093C"/>
<dbReference type="PeptideAtlas" id="P25046"/>
<dbReference type="EnsemblFungi" id="YBL093C_mRNA">
    <property type="protein sequence ID" value="YBL093C"/>
    <property type="gene ID" value="YBL093C"/>
</dbReference>
<dbReference type="GeneID" id="852184"/>
<dbReference type="KEGG" id="sce:YBL093C"/>
<dbReference type="AGR" id="SGD:S000000189"/>
<dbReference type="SGD" id="S000000189">
    <property type="gene designation" value="ROX3"/>
</dbReference>
<dbReference type="VEuPathDB" id="FungiDB:YBL093C"/>
<dbReference type="eggNOG" id="ENOG502QXG3">
    <property type="taxonomic scope" value="Eukaryota"/>
</dbReference>
<dbReference type="HOGENOM" id="CLU_117719_0_0_1"/>
<dbReference type="InParanoid" id="P25046"/>
<dbReference type="OMA" id="SYPTEFQ"/>
<dbReference type="OrthoDB" id="2160599at2759"/>
<dbReference type="BioCyc" id="YEAST:G3O-28981-MONOMER"/>
<dbReference type="BioGRID-ORCS" id="852184">
    <property type="hits" value="0 hits in 10 CRISPR screens"/>
</dbReference>
<dbReference type="PRO" id="PR:P25046"/>
<dbReference type="Proteomes" id="UP000002311">
    <property type="component" value="Chromosome II"/>
</dbReference>
<dbReference type="RNAct" id="P25046">
    <property type="molecule type" value="protein"/>
</dbReference>
<dbReference type="GO" id="GO:0070847">
    <property type="term" value="C:core mediator complex"/>
    <property type="evidence" value="ECO:0000314"/>
    <property type="project" value="SGD"/>
</dbReference>
<dbReference type="GO" id="GO:0016592">
    <property type="term" value="C:mediator complex"/>
    <property type="evidence" value="ECO:0000318"/>
    <property type="project" value="GO_Central"/>
</dbReference>
<dbReference type="GO" id="GO:0005634">
    <property type="term" value="C:nucleus"/>
    <property type="evidence" value="ECO:0000314"/>
    <property type="project" value="SGD"/>
</dbReference>
<dbReference type="GO" id="GO:0003713">
    <property type="term" value="F:transcription coactivator activity"/>
    <property type="evidence" value="ECO:0000315"/>
    <property type="project" value="SGD"/>
</dbReference>
<dbReference type="GO" id="GO:0003712">
    <property type="term" value="F:transcription coregulator activity"/>
    <property type="evidence" value="ECO:0000318"/>
    <property type="project" value="GO_Central"/>
</dbReference>
<dbReference type="GO" id="GO:0000122">
    <property type="term" value="P:negative regulation of transcription by RNA polymerase II"/>
    <property type="evidence" value="ECO:0000315"/>
    <property type="project" value="SGD"/>
</dbReference>
<dbReference type="GO" id="GO:0045944">
    <property type="term" value="P:positive regulation of transcription by RNA polymerase II"/>
    <property type="evidence" value="ECO:0000315"/>
    <property type="project" value="SGD"/>
</dbReference>
<dbReference type="GO" id="GO:0032968">
    <property type="term" value="P:positive regulation of transcription elongation by RNA polymerase II"/>
    <property type="evidence" value="ECO:0000314"/>
    <property type="project" value="ComplexPortal"/>
</dbReference>
<dbReference type="GO" id="GO:0060261">
    <property type="term" value="P:positive regulation of transcription initiation by RNA polymerase II"/>
    <property type="evidence" value="ECO:0000314"/>
    <property type="project" value="ComplexPortal"/>
</dbReference>
<dbReference type="GO" id="GO:0006357">
    <property type="term" value="P:regulation of transcription by RNA polymerase II"/>
    <property type="evidence" value="ECO:0000318"/>
    <property type="project" value="GO_Central"/>
</dbReference>
<dbReference type="GO" id="GO:0051123">
    <property type="term" value="P:RNA polymerase II preinitiation complex assembly"/>
    <property type="evidence" value="ECO:0000314"/>
    <property type="project" value="ComplexPortal"/>
</dbReference>
<dbReference type="GO" id="GO:0001113">
    <property type="term" value="P:transcription open complex formation at RNA polymerase II promoter"/>
    <property type="evidence" value="ECO:0000315"/>
    <property type="project" value="SGD"/>
</dbReference>
<dbReference type="InterPro" id="IPR013942">
    <property type="entry name" value="Mediator_Med19_fun"/>
</dbReference>
<dbReference type="PANTHER" id="PTHR28270">
    <property type="entry name" value="MEDIATOR OF RNA POLYMERASE II TRANSCRIPTION SUBUNIT 19"/>
    <property type="match status" value="1"/>
</dbReference>
<dbReference type="PANTHER" id="PTHR28270:SF1">
    <property type="entry name" value="MEDIATOR OF RNA POLYMERASE II TRANSCRIPTION SUBUNIT 19"/>
    <property type="match status" value="1"/>
</dbReference>
<dbReference type="Pfam" id="PF08633">
    <property type="entry name" value="Rox3"/>
    <property type="match status" value="1"/>
</dbReference>
<proteinExistence type="evidence at protein level"/>
<protein>
    <recommendedName>
        <fullName>Mediator of RNA polymerase II transcription subunit 19</fullName>
    </recommendedName>
    <alternativeName>
        <fullName>Hypoxic gene repressor protein 3</fullName>
    </alternativeName>
    <alternativeName>
        <fullName>Mediator complex subunit 19</fullName>
    </alternativeName>
    <alternativeName>
        <fullName>Negative regulator of URS2 protein 3</fullName>
    </alternativeName>
    <alternativeName>
        <fullName>SNF1 suppressor protein 7</fullName>
    </alternativeName>
</protein>
<feature type="chain" id="PRO_0000096370" description="Mediator of RNA polymerase II transcription subunit 19">
    <location>
        <begin position="1"/>
        <end position="220"/>
    </location>
</feature>
<feature type="region of interest" description="Disordered" evidence="1">
    <location>
        <begin position="171"/>
        <end position="220"/>
    </location>
</feature>
<feature type="compositionally biased region" description="Low complexity" evidence="1">
    <location>
        <begin position="178"/>
        <end position="189"/>
    </location>
</feature>
<feature type="compositionally biased region" description="Basic and acidic residues" evidence="1">
    <location>
        <begin position="208"/>
        <end position="220"/>
    </location>
</feature>
<feature type="sequence conflict" description="In Ref. 2; CAA56009." evidence="9" ref="2">
    <original>D</original>
    <variation>V</variation>
    <location>
        <position position="18"/>
    </location>
</feature>
<organism>
    <name type="scientific">Saccharomyces cerevisiae (strain ATCC 204508 / S288c)</name>
    <name type="common">Baker's yeast</name>
    <dbReference type="NCBI Taxonomy" id="559292"/>
    <lineage>
        <taxon>Eukaryota</taxon>
        <taxon>Fungi</taxon>
        <taxon>Dikarya</taxon>
        <taxon>Ascomycota</taxon>
        <taxon>Saccharomycotina</taxon>
        <taxon>Saccharomycetes</taxon>
        <taxon>Saccharomycetales</taxon>
        <taxon>Saccharomycetaceae</taxon>
        <taxon>Saccharomyces</taxon>
    </lineage>
</organism>
<reference key="1">
    <citation type="journal article" date="1991" name="Mol. Cell. Biol.">
        <title>The ROX3 gene encodes an essential nuclear protein involved in CYC7 gene expression in Saccharomyces cerevisiae.</title>
        <authorList>
            <person name="Rosenblum-Vos L.S."/>
            <person name="Rhodes L."/>
            <person name="Evangelista C.C. Jr."/>
            <person name="Boakye K.A."/>
            <person name="Zitomer R.S."/>
        </authorList>
    </citation>
    <scope>NUCLEOTIDE SEQUENCE [GENOMIC DNA]</scope>
</reference>
<reference key="2">
    <citation type="journal article" date="1995" name="Yeast">
        <title>Sequence analysis of a 78.6 kb segment of the left end of Saccharomyces cerevisiae chromosome II.</title>
        <authorList>
            <person name="Obermaier B."/>
            <person name="Gassenhuber J."/>
            <person name="Piravandi E."/>
            <person name="Domdey H."/>
        </authorList>
    </citation>
    <scope>NUCLEOTIDE SEQUENCE [GENOMIC DNA]</scope>
    <source>
        <strain>ATCC 204508 / S288c</strain>
    </source>
</reference>
<reference key="3">
    <citation type="journal article" date="1994" name="EMBO J.">
        <title>Complete DNA sequence of yeast chromosome II.</title>
        <authorList>
            <person name="Feldmann H."/>
            <person name="Aigle M."/>
            <person name="Aljinovic G."/>
            <person name="Andre B."/>
            <person name="Baclet M.C."/>
            <person name="Barthe C."/>
            <person name="Baur A."/>
            <person name="Becam A.-M."/>
            <person name="Biteau N."/>
            <person name="Boles E."/>
            <person name="Brandt T."/>
            <person name="Brendel M."/>
            <person name="Brueckner M."/>
            <person name="Bussereau F."/>
            <person name="Christiansen C."/>
            <person name="Contreras R."/>
            <person name="Crouzet M."/>
            <person name="Cziepluch C."/>
            <person name="Demolis N."/>
            <person name="Delaveau T."/>
            <person name="Doignon F."/>
            <person name="Domdey H."/>
            <person name="Duesterhus S."/>
            <person name="Dubois E."/>
            <person name="Dujon B."/>
            <person name="El Bakkoury M."/>
            <person name="Entian K.-D."/>
            <person name="Feuermann M."/>
            <person name="Fiers W."/>
            <person name="Fobo G.M."/>
            <person name="Fritz C."/>
            <person name="Gassenhuber J."/>
            <person name="Glansdorff N."/>
            <person name="Goffeau A."/>
            <person name="Grivell L.A."/>
            <person name="de Haan M."/>
            <person name="Hein C."/>
            <person name="Herbert C.J."/>
            <person name="Hollenberg C.P."/>
            <person name="Holmstroem K."/>
            <person name="Jacq C."/>
            <person name="Jacquet M."/>
            <person name="Jauniaux J.-C."/>
            <person name="Jonniaux J.-L."/>
            <person name="Kallesoee T."/>
            <person name="Kiesau P."/>
            <person name="Kirchrath L."/>
            <person name="Koetter P."/>
            <person name="Korol S."/>
            <person name="Liebl S."/>
            <person name="Logghe M."/>
            <person name="Lohan A.J.E."/>
            <person name="Louis E.J."/>
            <person name="Li Z.Y."/>
            <person name="Maat M.J."/>
            <person name="Mallet L."/>
            <person name="Mannhaupt G."/>
            <person name="Messenguy F."/>
            <person name="Miosga T."/>
            <person name="Molemans F."/>
            <person name="Mueller S."/>
            <person name="Nasr F."/>
            <person name="Obermaier B."/>
            <person name="Perea J."/>
            <person name="Pierard A."/>
            <person name="Piravandi E."/>
            <person name="Pohl F.M."/>
            <person name="Pohl T.M."/>
            <person name="Potier S."/>
            <person name="Proft M."/>
            <person name="Purnelle B."/>
            <person name="Ramezani Rad M."/>
            <person name="Rieger M."/>
            <person name="Rose M."/>
            <person name="Schaaff-Gerstenschlaeger I."/>
            <person name="Scherens B."/>
            <person name="Schwarzlose C."/>
            <person name="Skala J."/>
            <person name="Slonimski P.P."/>
            <person name="Smits P.H.M."/>
            <person name="Souciet J.-L."/>
            <person name="Steensma H.Y."/>
            <person name="Stucka R."/>
            <person name="Urrestarazu L.A."/>
            <person name="van der Aart Q.J.M."/>
            <person name="Van Dyck L."/>
            <person name="Vassarotti A."/>
            <person name="Vetter I."/>
            <person name="Vierendeels F."/>
            <person name="Vissers S."/>
            <person name="Wagner G."/>
            <person name="de Wergifosse P."/>
            <person name="Wolfe K.H."/>
            <person name="Zagulski M."/>
            <person name="Zimmermann F.K."/>
            <person name="Mewes H.-W."/>
            <person name="Kleine K."/>
        </authorList>
    </citation>
    <scope>NUCLEOTIDE SEQUENCE [LARGE SCALE GENOMIC DNA]</scope>
    <source>
        <strain>ATCC 204508 / S288c</strain>
    </source>
</reference>
<reference key="4">
    <citation type="journal article" date="2014" name="G3 (Bethesda)">
        <title>The reference genome sequence of Saccharomyces cerevisiae: Then and now.</title>
        <authorList>
            <person name="Engel S.R."/>
            <person name="Dietrich F.S."/>
            <person name="Fisk D.G."/>
            <person name="Binkley G."/>
            <person name="Balakrishnan R."/>
            <person name="Costanzo M.C."/>
            <person name="Dwight S.S."/>
            <person name="Hitz B.C."/>
            <person name="Karra K."/>
            <person name="Nash R.S."/>
            <person name="Weng S."/>
            <person name="Wong E.D."/>
            <person name="Lloyd P."/>
            <person name="Skrzypek M.S."/>
            <person name="Miyasato S.R."/>
            <person name="Simison M."/>
            <person name="Cherry J.M."/>
        </authorList>
    </citation>
    <scope>GENOME REANNOTATION</scope>
    <source>
        <strain>ATCC 204508 / S288c</strain>
    </source>
</reference>
<reference key="5">
    <citation type="journal article" date="2007" name="Genome Res.">
        <title>Approaching a complete repository of sequence-verified protein-encoding clones for Saccharomyces cerevisiae.</title>
        <authorList>
            <person name="Hu Y."/>
            <person name="Rolfs A."/>
            <person name="Bhullar B."/>
            <person name="Murthy T.V.S."/>
            <person name="Zhu C."/>
            <person name="Berger M.F."/>
            <person name="Camargo A.A."/>
            <person name="Kelley F."/>
            <person name="McCarron S."/>
            <person name="Jepson D."/>
            <person name="Richardson A."/>
            <person name="Raphael J."/>
            <person name="Moreira D."/>
            <person name="Taycher E."/>
            <person name="Zuo D."/>
            <person name="Mohr S."/>
            <person name="Kane M.F."/>
            <person name="Williamson J."/>
            <person name="Simpson A.J.G."/>
            <person name="Bulyk M.L."/>
            <person name="Harlow E."/>
            <person name="Marsischky G."/>
            <person name="Kolodner R.D."/>
            <person name="LaBaer J."/>
        </authorList>
    </citation>
    <scope>NUCLEOTIDE SEQUENCE [GENOMIC DNA]</scope>
    <source>
        <strain>ATCC 204508 / S288c</strain>
    </source>
</reference>
<reference key="6">
    <citation type="journal article" date="1997" name="J. Biol. Chem.">
        <title>Identification of Rox3 as a component of mediator and RNA polymerase II holoenzyme.</title>
        <authorList>
            <person name="Gustafsson C.M."/>
            <person name="Myers L.C."/>
            <person name="Li Y."/>
            <person name="Redd M.J."/>
            <person name="Lui M."/>
            <person name="Erdjument-Bromage H."/>
            <person name="Tempst P."/>
            <person name="Kornberg R.D."/>
        </authorList>
    </citation>
    <scope>PROTEIN SEQUENCE OF 148-172</scope>
    <scope>COMPONENT OF MEDIATOR COMPLEX</scope>
</reference>
<reference key="7">
    <citation type="journal article" date="2001" name="J. Biol. Chem.">
        <title>The structural and functional organization of the yeast mediator complex.</title>
        <authorList>
            <person name="Kang J.S."/>
            <person name="Kim S.H."/>
            <person name="Hwang M.S."/>
            <person name="Han S.J."/>
            <person name="Lee Y.C."/>
            <person name="Kim Y.-J."/>
        </authorList>
    </citation>
    <scope>INTERACTION WITH SRB4</scope>
    <scope>FUNCTION OF THE MEDIATOR COMPLEX</scope>
    <scope>INTERACTION OF THE MEDIATOR COMPLEX WITH RNA POLYMERASE II</scope>
</reference>
<reference key="8">
    <citation type="journal article" date="2003" name="Nature">
        <title>Global analysis of protein localization in budding yeast.</title>
        <authorList>
            <person name="Huh W.-K."/>
            <person name="Falvo J.V."/>
            <person name="Gerke L.C."/>
            <person name="Carroll A.S."/>
            <person name="Howson R.W."/>
            <person name="Weissman J.S."/>
            <person name="O'Shea E.K."/>
        </authorList>
    </citation>
    <scope>SUBCELLULAR LOCATION [LARGE SCALE ANALYSIS]</scope>
</reference>
<reference key="9">
    <citation type="journal article" date="2003" name="Nature">
        <title>Global analysis of protein expression in yeast.</title>
        <authorList>
            <person name="Ghaemmaghami S."/>
            <person name="Huh W.-K."/>
            <person name="Bower K."/>
            <person name="Howson R.W."/>
            <person name="Belle A."/>
            <person name="Dephoure N."/>
            <person name="O'Shea E.K."/>
            <person name="Weissman J.S."/>
        </authorList>
    </citation>
    <scope>LEVEL OF PROTEIN EXPRESSION [LARGE SCALE ANALYSIS]</scope>
</reference>
<reference key="10">
    <citation type="journal article" date="2004" name="Mol. Cell">
        <title>A unified nomenclature for protein subunits of mediator complexes linking transcriptional regulators to RNA polymerase II.</title>
        <authorList>
            <person name="Bourbon H.-M."/>
            <person name="Aguilera A."/>
            <person name="Ansari A.Z."/>
            <person name="Asturias F.J."/>
            <person name="Berk A.J."/>
            <person name="Bjoerklund S."/>
            <person name="Blackwell T.K."/>
            <person name="Borggrefe T."/>
            <person name="Carey M."/>
            <person name="Carlson M."/>
            <person name="Conaway J.W."/>
            <person name="Conaway R.C."/>
            <person name="Emmons S.W."/>
            <person name="Fondell J.D."/>
            <person name="Freedman L.P."/>
            <person name="Fukasawa T."/>
            <person name="Gustafsson C.M."/>
            <person name="Han M."/>
            <person name="He X."/>
            <person name="Herman P.K."/>
            <person name="Hinnebusch A.G."/>
            <person name="Holmberg S."/>
            <person name="Holstege F.C.P."/>
            <person name="Jaehning J.A."/>
            <person name="Kim Y.-J."/>
            <person name="Kuras L."/>
            <person name="Leutz A."/>
            <person name="Lis J.T."/>
            <person name="Meisterernest M."/>
            <person name="Naeaer A.M."/>
            <person name="Nasmyth K."/>
            <person name="Parvin J.D."/>
            <person name="Ptashne M."/>
            <person name="Reinberg D."/>
            <person name="Ronne H."/>
            <person name="Sadowski I."/>
            <person name="Sakurai H."/>
            <person name="Sipiczki M."/>
            <person name="Sternberg P.W."/>
            <person name="Stillman D.J."/>
            <person name="Strich R."/>
            <person name="Struhl K."/>
            <person name="Svejstrup J.Q."/>
            <person name="Tuck S."/>
            <person name="Winston F."/>
            <person name="Roeder R.G."/>
            <person name="Kornberg R.D."/>
        </authorList>
    </citation>
    <scope>NOMENCLATURE</scope>
</reference>
<reference key="11">
    <citation type="journal article" date="2004" name="Nucleic Acids Res.">
        <title>A high resolution protein interaction map of the yeast Mediator complex.</title>
        <authorList>
            <person name="Guglielmi B."/>
            <person name="van Berkum N.L."/>
            <person name="Klapholz B."/>
            <person name="Bijma T."/>
            <person name="Boube M."/>
            <person name="Boschiero C."/>
            <person name="Bourbon H.-M."/>
            <person name="Holstege F.C.P."/>
            <person name="Werner M."/>
        </authorList>
    </citation>
    <scope>TOPOLOGY OF THE MEDIATOR COMPLEX</scope>
</reference>
<reference key="12">
    <citation type="journal article" date="2005" name="J. Biol. Chem.">
        <title>Preponderance of free mediator in the yeast Saccharomyces cerevisiae.</title>
        <authorList>
            <person name="Takagi Y."/>
            <person name="Chadick J.Z."/>
            <person name="Davis J.A."/>
            <person name="Asturias F.J."/>
        </authorList>
    </citation>
    <scope>CHARACTERIZATION OF THE MEDIATOR COMPLEX</scope>
</reference>
<reference key="13">
    <citation type="journal article" date="2005" name="J. Biol. Chem.">
        <title>Mediator and TFIIH govern carboxyl-terminal domain-dependent transcription in yeast extracts.</title>
        <authorList>
            <person name="Nair D."/>
            <person name="Kim Y."/>
            <person name="Myers L.C."/>
        </authorList>
    </citation>
    <scope>FUNCTION OF THE MEDIATOR COMPLEX</scope>
</reference>
<reference key="14">
    <citation type="journal article" date="2006" name="J. Biol. Chem.">
        <title>Mediator as a general transcription factor.</title>
        <authorList>
            <person name="Takagi Y."/>
            <person name="Kornberg R.D."/>
        </authorList>
    </citation>
    <scope>FUNCTION OF THE MEDIATOR COMPLEX</scope>
</reference>
<reference key="15">
    <citation type="journal article" date="2006" name="Mol. Cell">
        <title>Genome-wide location of the coactivator mediator: binding without activation and transient Cdk8 interaction on DNA.</title>
        <authorList>
            <person name="Andrau J.-C."/>
            <person name="van de Pasch L."/>
            <person name="Lijnzaad P."/>
            <person name="Bijma T."/>
            <person name="Koerkamp M.G."/>
            <person name="van de Peppel J."/>
            <person name="Werner M."/>
            <person name="Holstege F.C.P."/>
        </authorList>
    </citation>
    <scope>SUBCELLULAR LOCATION</scope>
</reference>
<reference key="16">
    <citation type="journal article" date="2007" name="J. Biol. Chem.">
        <title>Med19(Rox3) regulates intermodule interactions in the Saccharomyces cerevisiae mediator complex.</title>
        <authorList>
            <person name="Baidoobonso S.M."/>
            <person name="Guidi B.W."/>
            <person name="Myers L.C."/>
        </authorList>
    </citation>
    <scope>FUNCTION</scope>
    <scope>CHARACTERIZATION OF THE MEDIATOR COMPLEX</scope>
    <scope>INTERACTION OF THE MEDIATOR COMPLEX WITH RNA POLYMERASE II</scope>
</reference>
<reference key="17">
    <citation type="journal article" date="2002" name="Mol. Cell">
        <title>Structure of the yeast RNA polymerase II holoenzyme: mediator conformation and polymerase interaction.</title>
        <authorList>
            <person name="Davis J.A."/>
            <person name="Takagi Y."/>
            <person name="Kornberg R.D."/>
            <person name="Asturias F.J."/>
        </authorList>
    </citation>
    <scope>ELECTRON MICROSCOPY OF MEDIATOR COMPLEX IN COMPLEX WITH RNA POLYMERASE II</scope>
</reference>
<name>MED19_YEAST</name>
<sequence length="220" mass="24857">MASRVDETTVPSYYYYVDPETTYTYQQPNPLQDLISVYGLDDISRQVARTNLDGTKAVKLRKSYKNQIADLSGKFSTIPTRENGKGGQIAHILFQNNPDMMIQPPQQGQNMSEQQWREQLRNRDIALFQPPNFDWDLCSSVLSQFERSYPSEFANQNQGGAQAPFDIDDLAFDLDGTGKSQSGSNSGNNSKKRKNKSSGSSMATPTHSDSHEDMKRRRLE</sequence>